<reference key="1">
    <citation type="journal article" date="1996" name="Science">
        <title>Complete genome sequence of the methanogenic archaeon, Methanococcus jannaschii.</title>
        <authorList>
            <person name="Bult C.J."/>
            <person name="White O."/>
            <person name="Olsen G.J."/>
            <person name="Zhou L."/>
            <person name="Fleischmann R.D."/>
            <person name="Sutton G.G."/>
            <person name="Blake J.A."/>
            <person name="FitzGerald L.M."/>
            <person name="Clayton R.A."/>
            <person name="Gocayne J.D."/>
            <person name="Kerlavage A.R."/>
            <person name="Dougherty B.A."/>
            <person name="Tomb J.-F."/>
            <person name="Adams M.D."/>
            <person name="Reich C.I."/>
            <person name="Overbeek R."/>
            <person name="Kirkness E.F."/>
            <person name="Weinstock K.G."/>
            <person name="Merrick J.M."/>
            <person name="Glodek A."/>
            <person name="Scott J.L."/>
            <person name="Geoghagen N.S.M."/>
            <person name="Weidman J.F."/>
            <person name="Fuhrmann J.L."/>
            <person name="Nguyen D."/>
            <person name="Utterback T.R."/>
            <person name="Kelley J.M."/>
            <person name="Peterson J.D."/>
            <person name="Sadow P.W."/>
            <person name="Hanna M.C."/>
            <person name="Cotton M.D."/>
            <person name="Roberts K.M."/>
            <person name="Hurst M.A."/>
            <person name="Kaine B.P."/>
            <person name="Borodovsky M."/>
            <person name="Klenk H.-P."/>
            <person name="Fraser C.M."/>
            <person name="Smith H.O."/>
            <person name="Woese C.R."/>
            <person name="Venter J.C."/>
        </authorList>
    </citation>
    <scope>NUCLEOTIDE SEQUENCE [LARGE SCALE GENOMIC DNA]</scope>
    <source>
        <strain>ATCC 43067 / DSM 2661 / JAL-1 / JCM 10045 / NBRC 100440</strain>
    </source>
</reference>
<accession>P81304</accession>
<organism>
    <name type="scientific">Methanocaldococcus jannaschii (strain ATCC 43067 / DSM 2661 / JAL-1 / JCM 10045 / NBRC 100440)</name>
    <name type="common">Methanococcus jannaschii</name>
    <dbReference type="NCBI Taxonomy" id="243232"/>
    <lineage>
        <taxon>Archaea</taxon>
        <taxon>Methanobacteriati</taxon>
        <taxon>Methanobacteriota</taxon>
        <taxon>Methanomada group</taxon>
        <taxon>Methanococci</taxon>
        <taxon>Methanococcales</taxon>
        <taxon>Methanocaldococcaceae</taxon>
        <taxon>Methanocaldococcus</taxon>
    </lineage>
</organism>
<name>Y22A_METJA</name>
<sequence>MDIELILLIVVLFLTPYLIALFIIFNPPYCILDYLLYKKYRKAKEEWHYITSTNMGMNRSRWIFILIVEIIALCSGFYILININRPHDEILTFSLIFLFIAIIYDKLTPASGTVEIYKEGIAVYIKIFNTLKPFLNRYIVLPWKFFKGYKIKSKNNTKYVILVPKSRLFFSIYLIDRDGNVEKTIRNHLNPIQ</sequence>
<keyword id="KW-1003">Cell membrane</keyword>
<keyword id="KW-0472">Membrane</keyword>
<keyword id="KW-1185">Reference proteome</keyword>
<keyword id="KW-0812">Transmembrane</keyword>
<keyword id="KW-1133">Transmembrane helix</keyword>
<comment type="subcellular location">
    <subcellularLocation>
        <location evidence="2">Cell membrane</location>
        <topology evidence="2">Multi-pass membrane protein</topology>
    </subcellularLocation>
</comment>
<feature type="chain" id="PRO_0000106748" description="Uncharacterized protein MJ0226.1">
    <location>
        <begin position="1"/>
        <end position="193"/>
    </location>
</feature>
<feature type="transmembrane region" description="Helical" evidence="1">
    <location>
        <begin position="5"/>
        <end position="25"/>
    </location>
</feature>
<feature type="transmembrane region" description="Helical" evidence="1">
    <location>
        <begin position="63"/>
        <end position="83"/>
    </location>
</feature>
<feature type="transmembrane region" description="Helical" evidence="1">
    <location>
        <begin position="90"/>
        <end position="110"/>
    </location>
</feature>
<proteinExistence type="predicted"/>
<evidence type="ECO:0000255" key="1"/>
<evidence type="ECO:0000305" key="2"/>
<dbReference type="EMBL" id="L77117">
    <property type="protein sequence ID" value="AAB98217.1"/>
    <property type="molecule type" value="Genomic_DNA"/>
</dbReference>
<dbReference type="RefSeq" id="WP_010869723.1">
    <property type="nucleotide sequence ID" value="NC_000909.1"/>
</dbReference>
<dbReference type="SMR" id="P81304"/>
<dbReference type="FunCoup" id="P81304">
    <property type="interactions" value="24"/>
</dbReference>
<dbReference type="PaxDb" id="243232-MJ_0226.1"/>
<dbReference type="EnsemblBacteria" id="AAB98217">
    <property type="protein sequence ID" value="AAB98217"/>
    <property type="gene ID" value="MJ_0226.1"/>
</dbReference>
<dbReference type="GeneID" id="1451078"/>
<dbReference type="KEGG" id="mja:MJ_0226.1"/>
<dbReference type="eggNOG" id="arCOG10447">
    <property type="taxonomic scope" value="Archaea"/>
</dbReference>
<dbReference type="HOGENOM" id="CLU_1405987_0_0_2"/>
<dbReference type="InParanoid" id="P81304"/>
<dbReference type="OrthoDB" id="65888at2157"/>
<dbReference type="Proteomes" id="UP000000805">
    <property type="component" value="Chromosome"/>
</dbReference>
<dbReference type="GO" id="GO:0005886">
    <property type="term" value="C:plasma membrane"/>
    <property type="evidence" value="ECO:0007669"/>
    <property type="project" value="UniProtKB-SubCell"/>
</dbReference>
<protein>
    <recommendedName>
        <fullName>Uncharacterized protein MJ0226.1</fullName>
    </recommendedName>
</protein>
<gene>
    <name type="ordered locus">MJ0226.1</name>
</gene>